<proteinExistence type="evidence at protein level"/>
<feature type="initiator methionine" description="Removed" evidence="2">
    <location>
        <position position="1"/>
    </location>
</feature>
<feature type="chain" id="PRO_0000067031" description="Myotrophin">
    <location>
        <begin position="2"/>
        <end position="118"/>
    </location>
</feature>
<feature type="repeat" description="ANK 1">
    <location>
        <begin position="2"/>
        <end position="30"/>
    </location>
</feature>
<feature type="repeat" description="ANK 2">
    <location>
        <begin position="34"/>
        <end position="66"/>
    </location>
</feature>
<feature type="repeat" description="ANK 3">
    <location>
        <begin position="67"/>
        <end position="99"/>
    </location>
</feature>
<feature type="modified residue" description="N-acetylcysteine" evidence="2">
    <location>
        <position position="2"/>
    </location>
</feature>
<feature type="modified residue" description="N6-acetyllysine" evidence="7">
    <location>
        <position position="4"/>
    </location>
</feature>
<feature type="modified residue" description="N6-acetyllysine" evidence="7">
    <location>
        <position position="11"/>
    </location>
</feature>
<feature type="modified residue" description="N6-acetyllysine" evidence="7">
    <location>
        <position position="24"/>
    </location>
</feature>
<feature type="modified residue" description="Phosphothreonine" evidence="8">
    <location>
        <position position="31"/>
    </location>
</feature>
<feature type="helix" evidence="9">
    <location>
        <begin position="3"/>
        <end position="11"/>
    </location>
</feature>
<feature type="helix" evidence="9">
    <location>
        <begin position="15"/>
        <end position="23"/>
    </location>
</feature>
<feature type="helix" evidence="9">
    <location>
        <begin position="38"/>
        <end position="44"/>
    </location>
</feature>
<feature type="helix" evidence="9">
    <location>
        <begin position="48"/>
        <end position="55"/>
    </location>
</feature>
<feature type="turn" evidence="9">
    <location>
        <begin position="56"/>
        <end position="58"/>
    </location>
</feature>
<feature type="helix" evidence="9">
    <location>
        <begin position="71"/>
        <end position="78"/>
    </location>
</feature>
<feature type="helix" evidence="9">
    <location>
        <begin position="81"/>
        <end position="89"/>
    </location>
</feature>
<feature type="helix" evidence="9">
    <location>
        <begin position="104"/>
        <end position="107"/>
    </location>
</feature>
<feature type="helix" evidence="9">
    <location>
        <begin position="111"/>
        <end position="117"/>
    </location>
</feature>
<organism>
    <name type="scientific">Homo sapiens</name>
    <name type="common">Human</name>
    <dbReference type="NCBI Taxonomy" id="9606"/>
    <lineage>
        <taxon>Eukaryota</taxon>
        <taxon>Metazoa</taxon>
        <taxon>Chordata</taxon>
        <taxon>Craniata</taxon>
        <taxon>Vertebrata</taxon>
        <taxon>Euteleostomi</taxon>
        <taxon>Mammalia</taxon>
        <taxon>Eutheria</taxon>
        <taxon>Euarchontoglires</taxon>
        <taxon>Primates</taxon>
        <taxon>Haplorrhini</taxon>
        <taxon>Catarrhini</taxon>
        <taxon>Hominidae</taxon>
        <taxon>Homo</taxon>
    </lineage>
</organism>
<comment type="function">
    <text evidence="1 3 4 5">Promotes dimerization of NF-kappa-B subunits and regulates NF-kappa-B transcription factor activity (By similarity). Plays a role in the regulation of the growth of actin filaments. Inhibits the activity of the F-actin-capping protein complex formed by the CAPZA1 and CAPZB heterodimer. Promotes growth of cardiomyocytes, but not cardiomyocyte proliferation. Promotes cardiac muscle hypertrophy.</text>
</comment>
<comment type="subunit">
    <text evidence="1 4 5">Interacts with RELA (By similarity). Interacts with the heterodimer formed by CAPZA1 and CAPZB.</text>
</comment>
<comment type="subcellular location">
    <subcellularLocation>
        <location evidence="6">Cytoplasm</location>
    </subcellularLocation>
    <subcellularLocation>
        <location evidence="1">Nucleus</location>
    </subcellularLocation>
    <subcellularLocation>
        <location evidence="1">Cytoplasm</location>
        <location evidence="1">Perinuclear region</location>
    </subcellularLocation>
</comment>
<comment type="tissue specificity">
    <text evidence="3">Ubiquitous.</text>
</comment>
<comment type="induction">
    <text evidence="3">Up-regulated in heart left ventricle of patients with severe coronary artery disease and history of myocardial ischemia. Up-regulated in heart left ventricle of patients with dilated cardiomyopathy.</text>
</comment>
<comment type="miscellaneous">
    <text>This protein is produced by a bicistronic gene which also produces the MPD6 protein from a non-overlapping reading frame. MPD6 belongs to a group of cryptic antigens without conventional genomic structure. It is encoded by a cryptic open reading frame located in the 3'-untranslated region of MTPN.</text>
</comment>
<comment type="similarity">
    <text evidence="6">Belongs to the myotrophin family.</text>
</comment>
<dbReference type="EMBL" id="AC015987">
    <property type="status" value="NOT_ANNOTATED_CDS"/>
    <property type="molecule type" value="Genomic_DNA"/>
</dbReference>
<dbReference type="EMBL" id="BC028093">
    <property type="protein sequence ID" value="AAH28093.1"/>
    <property type="molecule type" value="mRNA"/>
</dbReference>
<dbReference type="CCDS" id="CCDS5842.1"/>
<dbReference type="RefSeq" id="NP_665807.1">
    <property type="nucleotide sequence ID" value="NM_145808.4"/>
</dbReference>
<dbReference type="PDB" id="3AAA">
    <property type="method" value="X-ray"/>
    <property type="resolution" value="2.20 A"/>
    <property type="chains" value="C=1-118"/>
</dbReference>
<dbReference type="PDB" id="7DF7">
    <property type="method" value="X-ray"/>
    <property type="resolution" value="2.30 A"/>
    <property type="chains" value="A/B=1-118"/>
</dbReference>
<dbReference type="PDB" id="7DSA">
    <property type="method" value="X-ray"/>
    <property type="resolution" value="2.80 A"/>
    <property type="chains" value="C=1-118"/>
</dbReference>
<dbReference type="PDB" id="7DSB">
    <property type="method" value="X-ray"/>
    <property type="resolution" value="2.44 A"/>
    <property type="chains" value="C=1-118"/>
</dbReference>
<dbReference type="PDBsum" id="3AAA"/>
<dbReference type="PDBsum" id="7DF7"/>
<dbReference type="PDBsum" id="7DSA"/>
<dbReference type="PDBsum" id="7DSB"/>
<dbReference type="BMRB" id="P58546"/>
<dbReference type="SMR" id="P58546"/>
<dbReference type="BioGRID" id="126455">
    <property type="interactions" value="157"/>
</dbReference>
<dbReference type="DIP" id="DIP-50234N"/>
<dbReference type="FunCoup" id="P58546">
    <property type="interactions" value="3401"/>
</dbReference>
<dbReference type="IntAct" id="P58546">
    <property type="interactions" value="81"/>
</dbReference>
<dbReference type="MINT" id="P58546"/>
<dbReference type="STRING" id="9606.ENSP00000376800"/>
<dbReference type="GlyGen" id="P58546">
    <property type="glycosylation" value="2 sites, 1 O-linked glycan (1 site)"/>
</dbReference>
<dbReference type="iPTMnet" id="P58546"/>
<dbReference type="PhosphoSitePlus" id="P58546"/>
<dbReference type="SwissPalm" id="P58546"/>
<dbReference type="BioMuta" id="MTPN"/>
<dbReference type="DMDM" id="20138912"/>
<dbReference type="OGP" id="P58546"/>
<dbReference type="jPOST" id="P58546"/>
<dbReference type="MassIVE" id="P58546"/>
<dbReference type="PaxDb" id="9606-ENSP00000376800"/>
<dbReference type="PeptideAtlas" id="P58546"/>
<dbReference type="ProteomicsDB" id="57087"/>
<dbReference type="Pumba" id="P58546"/>
<dbReference type="TopDownProteomics" id="P58546"/>
<dbReference type="Antibodypedia" id="18167">
    <property type="antibodies" value="102 antibodies from 24 providers"/>
</dbReference>
<dbReference type="DNASU" id="136319"/>
<dbReference type="Ensembl" id="ENST00000393085.4">
    <property type="protein sequence ID" value="ENSP00000376800.3"/>
    <property type="gene ID" value="ENSG00000105887.11"/>
</dbReference>
<dbReference type="GeneID" id="136319"/>
<dbReference type="KEGG" id="hsa:136319"/>
<dbReference type="MANE-Select" id="ENST00000393085.4">
    <property type="protein sequence ID" value="ENSP00000376800.3"/>
    <property type="RefSeq nucleotide sequence ID" value="NM_145808.4"/>
    <property type="RefSeq protein sequence ID" value="NP_665807.1"/>
</dbReference>
<dbReference type="AGR" id="HGNC:15667"/>
<dbReference type="CTD" id="136319"/>
<dbReference type="DisGeNET" id="136319"/>
<dbReference type="GeneCards" id="MTPN"/>
<dbReference type="HGNC" id="HGNC:15667">
    <property type="gene designation" value="MTPN"/>
</dbReference>
<dbReference type="HPA" id="ENSG00000105887">
    <property type="expression patterns" value="Low tissue specificity"/>
</dbReference>
<dbReference type="MIM" id="606484">
    <property type="type" value="gene"/>
</dbReference>
<dbReference type="neXtProt" id="NX_P58546"/>
<dbReference type="OpenTargets" id="ENSG00000105887"/>
<dbReference type="PharmGKB" id="PA31271"/>
<dbReference type="VEuPathDB" id="HostDB:ENSG00000105887"/>
<dbReference type="eggNOG" id="KOG4214">
    <property type="taxonomic scope" value="Eukaryota"/>
</dbReference>
<dbReference type="GeneTree" id="ENSGT00430000031071"/>
<dbReference type="HOGENOM" id="CLU_000134_45_7_1"/>
<dbReference type="InParanoid" id="P58546"/>
<dbReference type="OMA" id="TALIDCT"/>
<dbReference type="OrthoDB" id="194358at2759"/>
<dbReference type="PAN-GO" id="P58546">
    <property type="GO annotations" value="3 GO annotations based on evolutionary models"/>
</dbReference>
<dbReference type="PhylomeDB" id="P58546"/>
<dbReference type="TreeFam" id="TF327387"/>
<dbReference type="PathwayCommons" id="P58546"/>
<dbReference type="SignaLink" id="P58546"/>
<dbReference type="BioGRID-ORCS" id="136319">
    <property type="hits" value="21 hits in 1147 CRISPR screens"/>
</dbReference>
<dbReference type="CD-CODE" id="DEE660B4">
    <property type="entry name" value="Stress granule"/>
</dbReference>
<dbReference type="ChiTaRS" id="MTPN">
    <property type="organism name" value="human"/>
</dbReference>
<dbReference type="EvolutionaryTrace" id="P58546"/>
<dbReference type="GeneWiki" id="MTPN"/>
<dbReference type="GenomeRNAi" id="136319"/>
<dbReference type="Pharos" id="P58546">
    <property type="development level" value="Tbio"/>
</dbReference>
<dbReference type="PRO" id="PR:P58546"/>
<dbReference type="Proteomes" id="UP000005640">
    <property type="component" value="Chromosome 7"/>
</dbReference>
<dbReference type="RNAct" id="P58546">
    <property type="molecule type" value="protein"/>
</dbReference>
<dbReference type="Bgee" id="ENSG00000105887">
    <property type="expression patterns" value="Expressed in cardiac muscle of right atrium and 193 other cell types or tissues"/>
</dbReference>
<dbReference type="ExpressionAtlas" id="P58546">
    <property type="expression patterns" value="baseline and differential"/>
</dbReference>
<dbReference type="GO" id="GO:0005737">
    <property type="term" value="C:cytoplasm"/>
    <property type="evidence" value="ECO:0000318"/>
    <property type="project" value="GO_Central"/>
</dbReference>
<dbReference type="GO" id="GO:0005829">
    <property type="term" value="C:cytosol"/>
    <property type="evidence" value="ECO:0000250"/>
    <property type="project" value="UniProtKB"/>
</dbReference>
<dbReference type="GO" id="GO:0008290">
    <property type="term" value="C:F-actin capping protein complex"/>
    <property type="evidence" value="ECO:0000314"/>
    <property type="project" value="UniProtKB"/>
</dbReference>
<dbReference type="GO" id="GO:0005634">
    <property type="term" value="C:nucleus"/>
    <property type="evidence" value="ECO:0000250"/>
    <property type="project" value="UniProtKB"/>
</dbReference>
<dbReference type="GO" id="GO:0048471">
    <property type="term" value="C:perinuclear region of cytoplasm"/>
    <property type="evidence" value="ECO:0007669"/>
    <property type="project" value="UniProtKB-SubCell"/>
</dbReference>
<dbReference type="GO" id="GO:0030182">
    <property type="term" value="P:neuron differentiation"/>
    <property type="evidence" value="ECO:0000303"/>
    <property type="project" value="UniProtKB"/>
</dbReference>
<dbReference type="GO" id="GO:0010613">
    <property type="term" value="P:positive regulation of cardiac muscle hypertrophy"/>
    <property type="evidence" value="ECO:0000315"/>
    <property type="project" value="UniProtKB"/>
</dbReference>
<dbReference type="GO" id="GO:0030307">
    <property type="term" value="P:positive regulation of cell growth"/>
    <property type="evidence" value="ECO:0000250"/>
    <property type="project" value="UniProtKB"/>
</dbReference>
<dbReference type="GO" id="GO:0010557">
    <property type="term" value="P:positive regulation of macromolecule biosynthetic process"/>
    <property type="evidence" value="ECO:0000250"/>
    <property type="project" value="UniProtKB"/>
</dbReference>
<dbReference type="GO" id="GO:0051092">
    <property type="term" value="P:positive regulation of NF-kappaB transcription factor activity"/>
    <property type="evidence" value="ECO:0000250"/>
    <property type="project" value="UniProtKB"/>
</dbReference>
<dbReference type="GO" id="GO:0051247">
    <property type="term" value="P:positive regulation of protein metabolic process"/>
    <property type="evidence" value="ECO:0000250"/>
    <property type="project" value="UniProtKB"/>
</dbReference>
<dbReference type="GO" id="GO:2000812">
    <property type="term" value="P:regulation of barbed-end actin filament capping"/>
    <property type="evidence" value="ECO:0000314"/>
    <property type="project" value="UniProtKB"/>
</dbReference>
<dbReference type="GO" id="GO:0008361">
    <property type="term" value="P:regulation of cell size"/>
    <property type="evidence" value="ECO:0000314"/>
    <property type="project" value="UniProtKB"/>
</dbReference>
<dbReference type="GO" id="GO:0016202">
    <property type="term" value="P:regulation of striated muscle tissue development"/>
    <property type="evidence" value="ECO:0000303"/>
    <property type="project" value="UniProtKB"/>
</dbReference>
<dbReference type="GO" id="GO:0006417">
    <property type="term" value="P:regulation of translation"/>
    <property type="evidence" value="ECO:0000303"/>
    <property type="project" value="UniProtKB"/>
</dbReference>
<dbReference type="FunFam" id="1.25.40.20:FF:000118">
    <property type="entry name" value="Myotrophin"/>
    <property type="match status" value="1"/>
</dbReference>
<dbReference type="Gene3D" id="1.25.40.20">
    <property type="entry name" value="Ankyrin repeat-containing domain"/>
    <property type="match status" value="1"/>
</dbReference>
<dbReference type="InterPro" id="IPR002110">
    <property type="entry name" value="Ankyrin_rpt"/>
</dbReference>
<dbReference type="InterPro" id="IPR036770">
    <property type="entry name" value="Ankyrin_rpt-contain_sf"/>
</dbReference>
<dbReference type="PANTHER" id="PTHR24171">
    <property type="entry name" value="ANKYRIN REPEAT DOMAIN-CONTAINING PROTEIN 39-RELATED"/>
    <property type="match status" value="1"/>
</dbReference>
<dbReference type="PANTHER" id="PTHR24171:SF8">
    <property type="entry name" value="BRCA1-ASSOCIATED RING DOMAIN PROTEIN 1"/>
    <property type="match status" value="1"/>
</dbReference>
<dbReference type="Pfam" id="PF12796">
    <property type="entry name" value="Ank_2"/>
    <property type="match status" value="1"/>
</dbReference>
<dbReference type="PRINTS" id="PR01415">
    <property type="entry name" value="ANKYRIN"/>
</dbReference>
<dbReference type="SMART" id="SM00248">
    <property type="entry name" value="ANK"/>
    <property type="match status" value="2"/>
</dbReference>
<dbReference type="SUPFAM" id="SSF48403">
    <property type="entry name" value="Ankyrin repeat"/>
    <property type="match status" value="1"/>
</dbReference>
<dbReference type="PROSITE" id="PS50297">
    <property type="entry name" value="ANK_REP_REGION"/>
    <property type="match status" value="1"/>
</dbReference>
<dbReference type="PROSITE" id="PS50088">
    <property type="entry name" value="ANK_REPEAT"/>
    <property type="match status" value="2"/>
</dbReference>
<gene>
    <name type="primary">MTPN</name>
</gene>
<evidence type="ECO:0000250" key="1"/>
<evidence type="ECO:0000250" key="2">
    <source>
        <dbReference type="UniProtKB" id="P62774"/>
    </source>
</evidence>
<evidence type="ECO:0000269" key="3">
    <source>
    </source>
</evidence>
<evidence type="ECO:0000269" key="4">
    <source>
    </source>
</evidence>
<evidence type="ECO:0000269" key="5">
    <source>
    </source>
</evidence>
<evidence type="ECO:0000305" key="6"/>
<evidence type="ECO:0007744" key="7">
    <source>
    </source>
</evidence>
<evidence type="ECO:0007744" key="8">
    <source>
    </source>
</evidence>
<evidence type="ECO:0007829" key="9">
    <source>
        <dbReference type="PDB" id="3AAA"/>
    </source>
</evidence>
<protein>
    <recommendedName>
        <fullName>Myotrophin</fullName>
    </recommendedName>
    <alternativeName>
        <fullName>Protein V-1</fullName>
    </alternativeName>
</protein>
<name>MTPN_HUMAN</name>
<reference key="1">
    <citation type="journal article" date="1999" name="J. Mol. Cell. Cardiol.">
        <title>cDNA sequence and characterization of the gene that encodes human myotrophin/V-1 protein, a mediator of cardiac hypertrophy.</title>
        <authorList>
            <person name="Anderson K.M."/>
            <person name="Berrebi-Bertrand I."/>
            <person name="Kirkpatrick R.B."/>
            <person name="McQueney M.S."/>
            <person name="Underwood D.C."/>
            <person name="Rouanet S."/>
            <person name="Chabot-Fletcher M."/>
        </authorList>
    </citation>
    <scope>NUCLEOTIDE SEQUENCE [MRNA]</scope>
    <scope>FUNCTION</scope>
    <scope>INDUCTION</scope>
    <scope>TISSUE SPECIFICITY</scope>
</reference>
<reference key="2">
    <citation type="journal article" date="2003" name="Nature">
        <title>The DNA sequence of human chromosome 7.</title>
        <authorList>
            <person name="Hillier L.W."/>
            <person name="Fulton R.S."/>
            <person name="Fulton L.A."/>
            <person name="Graves T.A."/>
            <person name="Pepin K.H."/>
            <person name="Wagner-McPherson C."/>
            <person name="Layman D."/>
            <person name="Maas J."/>
            <person name="Jaeger S."/>
            <person name="Walker R."/>
            <person name="Wylie K."/>
            <person name="Sekhon M."/>
            <person name="Becker M.C."/>
            <person name="O'Laughlin M.D."/>
            <person name="Schaller M.E."/>
            <person name="Fewell G.A."/>
            <person name="Delehaunty K.D."/>
            <person name="Miner T.L."/>
            <person name="Nash W.E."/>
            <person name="Cordes M."/>
            <person name="Du H."/>
            <person name="Sun H."/>
            <person name="Edwards J."/>
            <person name="Bradshaw-Cordum H."/>
            <person name="Ali J."/>
            <person name="Andrews S."/>
            <person name="Isak A."/>
            <person name="Vanbrunt A."/>
            <person name="Nguyen C."/>
            <person name="Du F."/>
            <person name="Lamar B."/>
            <person name="Courtney L."/>
            <person name="Kalicki J."/>
            <person name="Ozersky P."/>
            <person name="Bielicki L."/>
            <person name="Scott K."/>
            <person name="Holmes A."/>
            <person name="Harkins R."/>
            <person name="Harris A."/>
            <person name="Strong C.M."/>
            <person name="Hou S."/>
            <person name="Tomlinson C."/>
            <person name="Dauphin-Kohlberg S."/>
            <person name="Kozlowicz-Reilly A."/>
            <person name="Leonard S."/>
            <person name="Rohlfing T."/>
            <person name="Rock S.M."/>
            <person name="Tin-Wollam A.-M."/>
            <person name="Abbott A."/>
            <person name="Minx P."/>
            <person name="Maupin R."/>
            <person name="Strowmatt C."/>
            <person name="Latreille P."/>
            <person name="Miller N."/>
            <person name="Johnson D."/>
            <person name="Murray J."/>
            <person name="Woessner J.P."/>
            <person name="Wendl M.C."/>
            <person name="Yang S.-P."/>
            <person name="Schultz B.R."/>
            <person name="Wallis J.W."/>
            <person name="Spieth J."/>
            <person name="Bieri T.A."/>
            <person name="Nelson J.O."/>
            <person name="Berkowicz N."/>
            <person name="Wohldmann P.E."/>
            <person name="Cook L.L."/>
            <person name="Hickenbotham M.T."/>
            <person name="Eldred J."/>
            <person name="Williams D."/>
            <person name="Bedell J.A."/>
            <person name="Mardis E.R."/>
            <person name="Clifton S.W."/>
            <person name="Chissoe S.L."/>
            <person name="Marra M.A."/>
            <person name="Raymond C."/>
            <person name="Haugen E."/>
            <person name="Gillett W."/>
            <person name="Zhou Y."/>
            <person name="James R."/>
            <person name="Phelps K."/>
            <person name="Iadanoto S."/>
            <person name="Bubb K."/>
            <person name="Simms E."/>
            <person name="Levy R."/>
            <person name="Clendenning J."/>
            <person name="Kaul R."/>
            <person name="Kent W.J."/>
            <person name="Furey T.S."/>
            <person name="Baertsch R.A."/>
            <person name="Brent M.R."/>
            <person name="Keibler E."/>
            <person name="Flicek P."/>
            <person name="Bork P."/>
            <person name="Suyama M."/>
            <person name="Bailey J.A."/>
            <person name="Portnoy M.E."/>
            <person name="Torrents D."/>
            <person name="Chinwalla A.T."/>
            <person name="Gish W.R."/>
            <person name="Eddy S.R."/>
            <person name="McPherson J.D."/>
            <person name="Olson M.V."/>
            <person name="Eichler E.E."/>
            <person name="Green E.D."/>
            <person name="Waterston R.H."/>
            <person name="Wilson R.K."/>
        </authorList>
    </citation>
    <scope>NUCLEOTIDE SEQUENCE [LARGE SCALE GENOMIC DNA]</scope>
</reference>
<reference key="3">
    <citation type="journal article" date="2004" name="Genome Res.">
        <title>The status, quality, and expansion of the NIH full-length cDNA project: the Mammalian Gene Collection (MGC).</title>
        <authorList>
            <consortium name="The MGC Project Team"/>
        </authorList>
    </citation>
    <scope>NUCLEOTIDE SEQUENCE [LARGE SCALE MRNA]</scope>
    <source>
        <tissue>Lung</tissue>
    </source>
</reference>
<reference key="4">
    <citation type="journal article" date="2006" name="J. Biol. Chem.">
        <title>Binding of myotrophin/V-1 to actin-capping protein: implications for how capping protein binds to the filament barbed end.</title>
        <authorList>
            <person name="Bhattacharya N."/>
            <person name="Ghosh S."/>
            <person name="Sept D."/>
            <person name="Cooper J.A."/>
        </authorList>
    </citation>
    <scope>FUNCTION</scope>
    <scope>IDENTIFICATION IN AN ACTIN CAPPING COMPLEX</scope>
    <scope>INTERACTION WITH CAPZA1 AND CAPZB</scope>
</reference>
<reference key="5">
    <citation type="journal article" date="2009" name="Science">
        <title>Lysine acetylation targets protein complexes and co-regulates major cellular functions.</title>
        <authorList>
            <person name="Choudhary C."/>
            <person name="Kumar C."/>
            <person name="Gnad F."/>
            <person name="Nielsen M.L."/>
            <person name="Rehman M."/>
            <person name="Walther T.C."/>
            <person name="Olsen J.V."/>
            <person name="Mann M."/>
        </authorList>
    </citation>
    <scope>ACETYLATION [LARGE SCALE ANALYSIS] AT LYS-4; LYS-11 AND LYS-24</scope>
    <scope>IDENTIFICATION BY MASS SPECTROMETRY [LARGE SCALE ANALYSIS]</scope>
</reference>
<reference key="6">
    <citation type="journal article" date="2011" name="BMC Syst. Biol.">
        <title>Initial characterization of the human central proteome.</title>
        <authorList>
            <person name="Burkard T.R."/>
            <person name="Planyavsky M."/>
            <person name="Kaupe I."/>
            <person name="Breitwieser F.P."/>
            <person name="Buerckstuemmer T."/>
            <person name="Bennett K.L."/>
            <person name="Superti-Furga G."/>
            <person name="Colinge J."/>
        </authorList>
    </citation>
    <scope>IDENTIFICATION BY MASS SPECTROMETRY [LARGE SCALE ANALYSIS]</scope>
</reference>
<reference key="7">
    <citation type="journal article" date="2013" name="J. Proteome Res.">
        <title>Toward a comprehensive characterization of a human cancer cell phosphoproteome.</title>
        <authorList>
            <person name="Zhou H."/>
            <person name="Di Palma S."/>
            <person name="Preisinger C."/>
            <person name="Peng M."/>
            <person name="Polat A.N."/>
            <person name="Heck A.J."/>
            <person name="Mohammed S."/>
        </authorList>
    </citation>
    <scope>PHOSPHORYLATION [LARGE SCALE ANALYSIS] AT THR-31</scope>
    <scope>IDENTIFICATION BY MASS SPECTROMETRY [LARGE SCALE ANALYSIS]</scope>
    <source>
        <tissue>Cervix carcinoma</tissue>
        <tissue>Erythroleukemia</tissue>
    </source>
</reference>
<reference key="8">
    <citation type="journal article" date="2010" name="PLoS Biol.">
        <title>Two distinct mechanisms for actin capping protein regulation--steric and allosteric inhibition.</title>
        <authorList>
            <person name="Takeda S."/>
            <person name="Minakata S."/>
            <person name="Koike R."/>
            <person name="Kawahata I."/>
            <person name="Narita A."/>
            <person name="Kitazawa M."/>
            <person name="Ota M."/>
            <person name="Yamakuni T."/>
            <person name="Maeda Y."/>
            <person name="Nitanai Y."/>
        </authorList>
    </citation>
    <scope>X-RAY CRYSTALLOGRAPHY (2.2 ANGSTROMS) IN COMPLEX WITH CAPZA1 AND CAPZB</scope>
    <scope>FUNCTION</scope>
</reference>
<keyword id="KW-0002">3D-structure</keyword>
<keyword id="KW-0007">Acetylation</keyword>
<keyword id="KW-0040">ANK repeat</keyword>
<keyword id="KW-0963">Cytoplasm</keyword>
<keyword id="KW-0539">Nucleus</keyword>
<keyword id="KW-0597">Phosphoprotein</keyword>
<keyword id="KW-1267">Proteomics identification</keyword>
<keyword id="KW-1185">Reference proteome</keyword>
<keyword id="KW-0677">Repeat</keyword>
<sequence length="118" mass="12895">MCDKEFMWALKNGDLDEVKDYVAKGEDVNRTLEGGRKPLHYAADCGQLEILEFLLLKGADINAPDKHHITPLLSAVYEGHVSCVKLLLSKGADKTVKGPDGLTAFEATDNQAIKALLQ</sequence>
<accession>P58546</accession>